<accession>Q6MP09</accession>
<keyword id="KW-0067">ATP-binding</keyword>
<keyword id="KW-0963">Cytoplasm</keyword>
<keyword id="KW-0418">Kinase</keyword>
<keyword id="KW-0547">Nucleotide-binding</keyword>
<keyword id="KW-1185">Reference proteome</keyword>
<keyword id="KW-0808">Transferase</keyword>
<gene>
    <name evidence="1" type="primary">cmk</name>
    <name type="ordered locus">Bd1062</name>
</gene>
<dbReference type="EC" id="2.7.4.25" evidence="1"/>
<dbReference type="EMBL" id="BX842648">
    <property type="protein sequence ID" value="CAE78990.1"/>
    <property type="molecule type" value="Genomic_DNA"/>
</dbReference>
<dbReference type="RefSeq" id="WP_011163592.1">
    <property type="nucleotide sequence ID" value="NC_005363.1"/>
</dbReference>
<dbReference type="SMR" id="Q6MP09"/>
<dbReference type="STRING" id="264462.Bd1062"/>
<dbReference type="GeneID" id="93012120"/>
<dbReference type="KEGG" id="bba:Bd1062"/>
<dbReference type="eggNOG" id="COG0283">
    <property type="taxonomic scope" value="Bacteria"/>
</dbReference>
<dbReference type="HOGENOM" id="CLU_079959_0_0_7"/>
<dbReference type="Proteomes" id="UP000008080">
    <property type="component" value="Chromosome"/>
</dbReference>
<dbReference type="GO" id="GO:0005829">
    <property type="term" value="C:cytosol"/>
    <property type="evidence" value="ECO:0007669"/>
    <property type="project" value="TreeGrafter"/>
</dbReference>
<dbReference type="GO" id="GO:0005524">
    <property type="term" value="F:ATP binding"/>
    <property type="evidence" value="ECO:0007669"/>
    <property type="project" value="UniProtKB-UniRule"/>
</dbReference>
<dbReference type="GO" id="GO:0036430">
    <property type="term" value="F:CMP kinase activity"/>
    <property type="evidence" value="ECO:0007669"/>
    <property type="project" value="RHEA"/>
</dbReference>
<dbReference type="GO" id="GO:0036431">
    <property type="term" value="F:dCMP kinase activity"/>
    <property type="evidence" value="ECO:0007669"/>
    <property type="project" value="RHEA"/>
</dbReference>
<dbReference type="GO" id="GO:0015949">
    <property type="term" value="P:nucleobase-containing small molecule interconversion"/>
    <property type="evidence" value="ECO:0007669"/>
    <property type="project" value="TreeGrafter"/>
</dbReference>
<dbReference type="GO" id="GO:0006220">
    <property type="term" value="P:pyrimidine nucleotide metabolic process"/>
    <property type="evidence" value="ECO:0007669"/>
    <property type="project" value="UniProtKB-UniRule"/>
</dbReference>
<dbReference type="CDD" id="cd02020">
    <property type="entry name" value="CMPK"/>
    <property type="match status" value="1"/>
</dbReference>
<dbReference type="Gene3D" id="3.40.50.300">
    <property type="entry name" value="P-loop containing nucleotide triphosphate hydrolases"/>
    <property type="match status" value="1"/>
</dbReference>
<dbReference type="HAMAP" id="MF_00238">
    <property type="entry name" value="Cytidyl_kinase_type1"/>
    <property type="match status" value="1"/>
</dbReference>
<dbReference type="InterPro" id="IPR003136">
    <property type="entry name" value="Cytidylate_kin"/>
</dbReference>
<dbReference type="InterPro" id="IPR011994">
    <property type="entry name" value="Cytidylate_kinase_dom"/>
</dbReference>
<dbReference type="InterPro" id="IPR027417">
    <property type="entry name" value="P-loop_NTPase"/>
</dbReference>
<dbReference type="NCBIfam" id="TIGR00017">
    <property type="entry name" value="cmk"/>
    <property type="match status" value="1"/>
</dbReference>
<dbReference type="PANTHER" id="PTHR21299:SF2">
    <property type="entry name" value="CYTIDYLATE KINASE"/>
    <property type="match status" value="1"/>
</dbReference>
<dbReference type="PANTHER" id="PTHR21299">
    <property type="entry name" value="CYTIDYLATE KINASE/PANTOATE-BETA-ALANINE LIGASE"/>
    <property type="match status" value="1"/>
</dbReference>
<dbReference type="Pfam" id="PF02224">
    <property type="entry name" value="Cytidylate_kin"/>
    <property type="match status" value="1"/>
</dbReference>
<dbReference type="SUPFAM" id="SSF52540">
    <property type="entry name" value="P-loop containing nucleoside triphosphate hydrolases"/>
    <property type="match status" value="1"/>
</dbReference>
<name>KCY_BDEBA</name>
<comment type="catalytic activity">
    <reaction evidence="1">
        <text>CMP + ATP = CDP + ADP</text>
        <dbReference type="Rhea" id="RHEA:11600"/>
        <dbReference type="ChEBI" id="CHEBI:30616"/>
        <dbReference type="ChEBI" id="CHEBI:58069"/>
        <dbReference type="ChEBI" id="CHEBI:60377"/>
        <dbReference type="ChEBI" id="CHEBI:456216"/>
        <dbReference type="EC" id="2.7.4.25"/>
    </reaction>
</comment>
<comment type="catalytic activity">
    <reaction evidence="1">
        <text>dCMP + ATP = dCDP + ADP</text>
        <dbReference type="Rhea" id="RHEA:25094"/>
        <dbReference type="ChEBI" id="CHEBI:30616"/>
        <dbReference type="ChEBI" id="CHEBI:57566"/>
        <dbReference type="ChEBI" id="CHEBI:58593"/>
        <dbReference type="ChEBI" id="CHEBI:456216"/>
        <dbReference type="EC" id="2.7.4.25"/>
    </reaction>
</comment>
<comment type="subcellular location">
    <subcellularLocation>
        <location evidence="1">Cytoplasm</location>
    </subcellularLocation>
</comment>
<comment type="similarity">
    <text evidence="1">Belongs to the cytidylate kinase family. Type 1 subfamily.</text>
</comment>
<sequence length="217" mass="23783">MGMVITIDGPAASGKSSVSRELARRLGWQWVSTGAFYRGLAFAALQLQIDLDDVSTLASLTHDPVWSVKMDDERTRVFFKDQDVTDQIAHEDVGNFASKVSHYPEVRKALLDAQRNCSAGPQGLVAEGRDCGTVVFPTAEAKVYLTANSEHRAARRAAELGLDHEDMVKAQQQRDLQDSTRKVAPMAVPEDALVVDTTALNLNQVVDAVVEYVKNKI</sequence>
<reference key="1">
    <citation type="journal article" date="2004" name="Science">
        <title>A predator unmasked: life cycle of Bdellovibrio bacteriovorus from a genomic perspective.</title>
        <authorList>
            <person name="Rendulic S."/>
            <person name="Jagtap P."/>
            <person name="Rosinus A."/>
            <person name="Eppinger M."/>
            <person name="Baar C."/>
            <person name="Lanz C."/>
            <person name="Keller H."/>
            <person name="Lambert C."/>
            <person name="Evans K.J."/>
            <person name="Goesmann A."/>
            <person name="Meyer F."/>
            <person name="Sockett R.E."/>
            <person name="Schuster S.C."/>
        </authorList>
    </citation>
    <scope>NUCLEOTIDE SEQUENCE [LARGE SCALE GENOMIC DNA]</scope>
    <source>
        <strain>ATCC 15356 / DSM 50701 / NCIMB 9529 / HD100</strain>
    </source>
</reference>
<protein>
    <recommendedName>
        <fullName evidence="1">Cytidylate kinase</fullName>
        <shortName evidence="1">CK</shortName>
        <ecNumber evidence="1">2.7.4.25</ecNumber>
    </recommendedName>
    <alternativeName>
        <fullName evidence="1">Cytidine monophosphate kinase</fullName>
        <shortName evidence="1">CMP kinase</shortName>
    </alternativeName>
</protein>
<evidence type="ECO:0000255" key="1">
    <source>
        <dbReference type="HAMAP-Rule" id="MF_00238"/>
    </source>
</evidence>
<organism>
    <name type="scientific">Bdellovibrio bacteriovorus (strain ATCC 15356 / DSM 50701 / NCIMB 9529 / HD100)</name>
    <dbReference type="NCBI Taxonomy" id="264462"/>
    <lineage>
        <taxon>Bacteria</taxon>
        <taxon>Pseudomonadati</taxon>
        <taxon>Bdellovibrionota</taxon>
        <taxon>Bdellovibrionia</taxon>
        <taxon>Bdellovibrionales</taxon>
        <taxon>Pseudobdellovibrionaceae</taxon>
        <taxon>Bdellovibrio</taxon>
    </lineage>
</organism>
<proteinExistence type="inferred from homology"/>
<feature type="chain" id="PRO_0000131884" description="Cytidylate kinase">
    <location>
        <begin position="1"/>
        <end position="217"/>
    </location>
</feature>
<feature type="binding site" evidence="1">
    <location>
        <begin position="9"/>
        <end position="17"/>
    </location>
    <ligand>
        <name>ATP</name>
        <dbReference type="ChEBI" id="CHEBI:30616"/>
    </ligand>
</feature>